<evidence type="ECO:0000255" key="1">
    <source>
        <dbReference type="HAMAP-Rule" id="MF_01189"/>
    </source>
</evidence>
<evidence type="ECO:0000305" key="2"/>
<name>NEPI_SHIBS</name>
<reference key="1">
    <citation type="journal article" date="2005" name="Nucleic Acids Res.">
        <title>Genome dynamics and diversity of Shigella species, the etiologic agents of bacillary dysentery.</title>
        <authorList>
            <person name="Yang F."/>
            <person name="Yang J."/>
            <person name="Zhang X."/>
            <person name="Chen L."/>
            <person name="Jiang Y."/>
            <person name="Yan Y."/>
            <person name="Tang X."/>
            <person name="Wang J."/>
            <person name="Xiong Z."/>
            <person name="Dong J."/>
            <person name="Xue Y."/>
            <person name="Zhu Y."/>
            <person name="Xu X."/>
            <person name="Sun L."/>
            <person name="Chen S."/>
            <person name="Nie H."/>
            <person name="Peng J."/>
            <person name="Xu J."/>
            <person name="Wang Y."/>
            <person name="Yuan Z."/>
            <person name="Wen Y."/>
            <person name="Yao Z."/>
            <person name="Shen Y."/>
            <person name="Qiang B."/>
            <person name="Hou Y."/>
            <person name="Yu J."/>
            <person name="Jin Q."/>
        </authorList>
    </citation>
    <scope>NUCLEOTIDE SEQUENCE [LARGE SCALE GENOMIC DNA]</scope>
    <source>
        <strain>Sb227</strain>
    </source>
</reference>
<keyword id="KW-0050">Antiport</keyword>
<keyword id="KW-0997">Cell inner membrane</keyword>
<keyword id="KW-1003">Cell membrane</keyword>
<keyword id="KW-0472">Membrane</keyword>
<keyword id="KW-0812">Transmembrane</keyword>
<keyword id="KW-1133">Transmembrane helix</keyword>
<keyword id="KW-0813">Transport</keyword>
<accession>Q31US4</accession>
<organism>
    <name type="scientific">Shigella boydii serotype 4 (strain Sb227)</name>
    <dbReference type="NCBI Taxonomy" id="300268"/>
    <lineage>
        <taxon>Bacteria</taxon>
        <taxon>Pseudomonadati</taxon>
        <taxon>Pseudomonadota</taxon>
        <taxon>Gammaproteobacteria</taxon>
        <taxon>Enterobacterales</taxon>
        <taxon>Enterobacteriaceae</taxon>
        <taxon>Shigella</taxon>
    </lineage>
</organism>
<sequence length="396" mass="41789">MSEFIAENRGADAITRPNWSAVFSVAFCVACLIIVEFLPVSLLTPMAQDLGISEGVAGQSVTVTAFVAMFASLFITQTIQATDRCYVVILFAVLLTLSCLLVSFANSFSLLLIGRACLGLALGGFWAMSASLTMRLVPPRTVPKALSVIFGAVSIALVIAAPLGSFLGELIGWRNVFNAAAVMGVLCIFWIIKSLPSLPGEPSHQKQNTFRLLQRPGVMAGMIAIFMSFAGQFAFFTYIRPVYMNLAGFGVDGLTLVLLSFGIASFIGTSLSSFILKRSVKLALAGAPLILAVSALVLTLWGSDKIVATGVAIIWGLTFALVPVGWSTWITRSLADQAEKAGSIQVAVIQLANTCGAAIGGYALDNIGLTSPLMLSGTLMLLTALLVTAKVKMKKS</sequence>
<protein>
    <recommendedName>
        <fullName evidence="1">Purine ribonucleoside efflux pump NepI</fullName>
    </recommendedName>
</protein>
<gene>
    <name evidence="1" type="primary">nepI</name>
    <name type="ordered locus">SBO_3709</name>
</gene>
<proteinExistence type="inferred from homology"/>
<feature type="chain" id="PRO_0000294117" description="Purine ribonucleoside efflux pump NepI">
    <location>
        <begin position="1"/>
        <end position="396"/>
    </location>
</feature>
<feature type="topological domain" description="Cytoplasmic" evidence="1">
    <location>
        <begin position="1"/>
        <end position="21"/>
    </location>
</feature>
<feature type="transmembrane region" description="Helical" evidence="1">
    <location>
        <begin position="22"/>
        <end position="42"/>
    </location>
</feature>
<feature type="topological domain" description="Periplasmic" evidence="1">
    <location>
        <begin position="43"/>
        <end position="54"/>
    </location>
</feature>
<feature type="transmembrane region" description="Helical" evidence="1">
    <location>
        <begin position="55"/>
        <end position="75"/>
    </location>
</feature>
<feature type="topological domain" description="Cytoplasmic" evidence="1">
    <location>
        <begin position="76"/>
        <end position="85"/>
    </location>
</feature>
<feature type="transmembrane region" description="Helical" evidence="1">
    <location>
        <begin position="86"/>
        <end position="106"/>
    </location>
</feature>
<feature type="topological domain" description="Periplasmic" evidence="1">
    <location>
        <position position="107"/>
    </location>
</feature>
<feature type="transmembrane region" description="Helical" evidence="1">
    <location>
        <begin position="108"/>
        <end position="128"/>
    </location>
</feature>
<feature type="topological domain" description="Cytoplasmic" evidence="1">
    <location>
        <begin position="129"/>
        <end position="147"/>
    </location>
</feature>
<feature type="transmembrane region" description="Helical" evidence="1">
    <location>
        <begin position="148"/>
        <end position="168"/>
    </location>
</feature>
<feature type="topological domain" description="Periplasmic" evidence="1">
    <location>
        <begin position="169"/>
        <end position="175"/>
    </location>
</feature>
<feature type="transmembrane region" description="Helical" evidence="1">
    <location>
        <begin position="176"/>
        <end position="196"/>
    </location>
</feature>
<feature type="topological domain" description="Cytoplasmic" evidence="1">
    <location>
        <begin position="197"/>
        <end position="215"/>
    </location>
</feature>
<feature type="transmembrane region" description="Helical" evidence="1">
    <location>
        <begin position="216"/>
        <end position="236"/>
    </location>
</feature>
<feature type="topological domain" description="Periplasmic" evidence="1">
    <location>
        <begin position="237"/>
        <end position="255"/>
    </location>
</feature>
<feature type="transmembrane region" description="Helical" evidence="1">
    <location>
        <begin position="256"/>
        <end position="276"/>
    </location>
</feature>
<feature type="topological domain" description="Cytoplasmic" evidence="1">
    <location>
        <begin position="277"/>
        <end position="281"/>
    </location>
</feature>
<feature type="transmembrane region" description="Helical" evidence="1">
    <location>
        <begin position="282"/>
        <end position="302"/>
    </location>
</feature>
<feature type="topological domain" description="Periplasmic" evidence="1">
    <location>
        <begin position="303"/>
        <end position="305"/>
    </location>
</feature>
<feature type="transmembrane region" description="Helical" evidence="1">
    <location>
        <begin position="306"/>
        <end position="326"/>
    </location>
</feature>
<feature type="topological domain" description="Cytoplasmic" evidence="1">
    <location>
        <begin position="327"/>
        <end position="343"/>
    </location>
</feature>
<feature type="transmembrane region" description="Helical" evidence="1">
    <location>
        <begin position="344"/>
        <end position="364"/>
    </location>
</feature>
<feature type="topological domain" description="Periplasmic" evidence="1">
    <location>
        <begin position="365"/>
        <end position="366"/>
    </location>
</feature>
<feature type="transmembrane region" description="Helical" evidence="1">
    <location>
        <begin position="367"/>
        <end position="387"/>
    </location>
</feature>
<feature type="topological domain" description="Cytoplasmic" evidence="1">
    <location>
        <begin position="388"/>
        <end position="396"/>
    </location>
</feature>
<dbReference type="EMBL" id="CP000036">
    <property type="protein sequence ID" value="ABB68184.1"/>
    <property type="status" value="ALT_INIT"/>
    <property type="molecule type" value="Genomic_DNA"/>
</dbReference>
<dbReference type="RefSeq" id="WP_004987318.1">
    <property type="nucleotide sequence ID" value="NC_007613.1"/>
</dbReference>
<dbReference type="SMR" id="Q31US4"/>
<dbReference type="KEGG" id="sbo:SBO_3709"/>
<dbReference type="HOGENOM" id="CLU_001265_61_1_6"/>
<dbReference type="Proteomes" id="UP000007067">
    <property type="component" value="Chromosome"/>
</dbReference>
<dbReference type="GO" id="GO:0005886">
    <property type="term" value="C:plasma membrane"/>
    <property type="evidence" value="ECO:0007669"/>
    <property type="project" value="UniProtKB-SubCell"/>
</dbReference>
<dbReference type="GO" id="GO:0015297">
    <property type="term" value="F:antiporter activity"/>
    <property type="evidence" value="ECO:0007669"/>
    <property type="project" value="UniProtKB-KW"/>
</dbReference>
<dbReference type="GO" id="GO:0015211">
    <property type="term" value="F:purine nucleoside transmembrane transporter activity"/>
    <property type="evidence" value="ECO:0007669"/>
    <property type="project" value="UniProtKB-UniRule"/>
</dbReference>
<dbReference type="CDD" id="cd17324">
    <property type="entry name" value="MFS_NepI_like"/>
    <property type="match status" value="1"/>
</dbReference>
<dbReference type="FunFam" id="1.20.1250.20:FF:000113">
    <property type="entry name" value="Purine ribonucleoside efflux pump NepI"/>
    <property type="match status" value="1"/>
</dbReference>
<dbReference type="Gene3D" id="1.20.1250.20">
    <property type="entry name" value="MFS general substrate transporter like domains"/>
    <property type="match status" value="1"/>
</dbReference>
<dbReference type="HAMAP" id="MF_01189">
    <property type="entry name" value="MFS_NepI"/>
    <property type="match status" value="1"/>
</dbReference>
<dbReference type="InterPro" id="IPR011701">
    <property type="entry name" value="MFS"/>
</dbReference>
<dbReference type="InterPro" id="IPR020846">
    <property type="entry name" value="MFS_dom"/>
</dbReference>
<dbReference type="InterPro" id="IPR050189">
    <property type="entry name" value="MFS_Efflux_Transporters"/>
</dbReference>
<dbReference type="InterPro" id="IPR023680">
    <property type="entry name" value="MFS_NepI"/>
</dbReference>
<dbReference type="InterPro" id="IPR036259">
    <property type="entry name" value="MFS_trans_sf"/>
</dbReference>
<dbReference type="NCBIfam" id="NF007578">
    <property type="entry name" value="PRK10213.1"/>
    <property type="match status" value="1"/>
</dbReference>
<dbReference type="PANTHER" id="PTHR43124">
    <property type="entry name" value="PURINE EFFLUX PUMP PBUE"/>
    <property type="match status" value="1"/>
</dbReference>
<dbReference type="PANTHER" id="PTHR43124:SF5">
    <property type="entry name" value="PURINE RIBONUCLEOSIDE EFFLUX PUMP NEPI"/>
    <property type="match status" value="1"/>
</dbReference>
<dbReference type="Pfam" id="PF07690">
    <property type="entry name" value="MFS_1"/>
    <property type="match status" value="1"/>
</dbReference>
<dbReference type="SUPFAM" id="SSF103473">
    <property type="entry name" value="MFS general substrate transporter"/>
    <property type="match status" value="1"/>
</dbReference>
<dbReference type="PROSITE" id="PS50850">
    <property type="entry name" value="MFS"/>
    <property type="match status" value="1"/>
</dbReference>
<comment type="function">
    <text evidence="1">Involved in the efflux of purine ribonucleosides, such as inosine and guanosine.</text>
</comment>
<comment type="catalytic activity">
    <reaction evidence="1">
        <text>inosine(in) + H(+)(out) = inosine(out) + H(+)(in)</text>
        <dbReference type="Rhea" id="RHEA:29211"/>
        <dbReference type="ChEBI" id="CHEBI:15378"/>
        <dbReference type="ChEBI" id="CHEBI:17596"/>
    </reaction>
    <physiologicalReaction direction="left-to-right" evidence="1">
        <dbReference type="Rhea" id="RHEA:29212"/>
    </physiologicalReaction>
</comment>
<comment type="catalytic activity">
    <reaction evidence="1">
        <text>guanosine(in) + H(+)(out) = guanosine(out) + H(+)(in)</text>
        <dbReference type="Rhea" id="RHEA:29583"/>
        <dbReference type="ChEBI" id="CHEBI:15378"/>
        <dbReference type="ChEBI" id="CHEBI:16750"/>
    </reaction>
    <physiologicalReaction direction="left-to-right" evidence="1">
        <dbReference type="Rhea" id="RHEA:29584"/>
    </physiologicalReaction>
</comment>
<comment type="subcellular location">
    <subcellularLocation>
        <location evidence="1">Cell inner membrane</location>
        <topology evidence="1">Multi-pass membrane protein</topology>
    </subcellularLocation>
</comment>
<comment type="similarity">
    <text evidence="1">Belongs to the major facilitator superfamily. DHA1 family. NepI (TC 2.A.1.2.26) subfamily.</text>
</comment>
<comment type="sequence caution" evidence="2">
    <conflict type="erroneous initiation">
        <sequence resource="EMBL-CDS" id="ABB68184"/>
    </conflict>
</comment>